<reference key="1">
    <citation type="journal article" date="1996" name="Nucleic Acids Res.">
        <title>Complete sequence analysis of the genome of the bacterium Mycoplasma pneumoniae.</title>
        <authorList>
            <person name="Himmelreich R."/>
            <person name="Hilbert H."/>
            <person name="Plagens H."/>
            <person name="Pirkl E."/>
            <person name="Li B.-C."/>
            <person name="Herrmann R."/>
        </authorList>
    </citation>
    <scope>NUCLEOTIDE SEQUENCE [LARGE SCALE GENOMIC DNA]</scope>
    <source>
        <strain>ATCC 29342 / M129 / Subtype 1</strain>
    </source>
</reference>
<proteinExistence type="inferred from homology"/>
<name>Y650_MYCPN</name>
<organism>
    <name type="scientific">Mycoplasma pneumoniae (strain ATCC 29342 / M129 / Subtype 1)</name>
    <name type="common">Mycoplasmoides pneumoniae</name>
    <dbReference type="NCBI Taxonomy" id="272634"/>
    <lineage>
        <taxon>Bacteria</taxon>
        <taxon>Bacillati</taxon>
        <taxon>Mycoplasmatota</taxon>
        <taxon>Mycoplasmoidales</taxon>
        <taxon>Mycoplasmoidaceae</taxon>
        <taxon>Mycoplasmoides</taxon>
    </lineage>
</organism>
<dbReference type="EMBL" id="U00089">
    <property type="protein sequence ID" value="AAB95840.1"/>
    <property type="molecule type" value="Genomic_DNA"/>
</dbReference>
<dbReference type="PIR" id="S73518">
    <property type="entry name" value="S73518"/>
</dbReference>
<dbReference type="RefSeq" id="NP_110339.1">
    <property type="nucleotide sequence ID" value="NC_000912.1"/>
</dbReference>
<dbReference type="RefSeq" id="WP_010875007.1">
    <property type="nucleotide sequence ID" value="NZ_OU342337.1"/>
</dbReference>
<dbReference type="IntAct" id="P75147">
    <property type="interactions" value="2"/>
</dbReference>
<dbReference type="STRING" id="272634.MPN_650"/>
<dbReference type="EnsemblBacteria" id="AAB95840">
    <property type="protein sequence ID" value="AAB95840"/>
    <property type="gene ID" value="MPN_650"/>
</dbReference>
<dbReference type="KEGG" id="mpn:MPN_650"/>
<dbReference type="PATRIC" id="fig|272634.6.peg.713"/>
<dbReference type="HOGENOM" id="CLU_159944_0_0_14"/>
<dbReference type="BioCyc" id="MPNE272634:G1GJ3-1035-MONOMER"/>
<dbReference type="Proteomes" id="UP000000808">
    <property type="component" value="Chromosome"/>
</dbReference>
<dbReference type="GO" id="GO:0005886">
    <property type="term" value="C:plasma membrane"/>
    <property type="evidence" value="ECO:0007669"/>
    <property type="project" value="UniProtKB-SubCell"/>
</dbReference>
<dbReference type="InterPro" id="IPR001595">
    <property type="entry name" value="Lipoprotein_3"/>
</dbReference>
<dbReference type="Pfam" id="PF00938">
    <property type="entry name" value="Lipoprotein_3"/>
    <property type="match status" value="1"/>
</dbReference>
<dbReference type="PROSITE" id="PS51257">
    <property type="entry name" value="PROKAR_LIPOPROTEIN"/>
    <property type="match status" value="1"/>
</dbReference>
<comment type="subcellular location">
    <subcellularLocation>
        <location evidence="1">Cell membrane</location>
        <topology evidence="1">Lipid-anchor</topology>
    </subcellularLocation>
</comment>
<comment type="similarity">
    <text evidence="2">Belongs to the MG439/MG440 family.</text>
</comment>
<accession>P75147</accession>
<evidence type="ECO:0000255" key="1">
    <source>
        <dbReference type="PROSITE-ProRule" id="PRU00303"/>
    </source>
</evidence>
<evidence type="ECO:0000305" key="2"/>
<feature type="signal peptide" evidence="1">
    <location>
        <begin position="1"/>
        <end position="19"/>
    </location>
</feature>
<feature type="chain" id="PRO_0000014063" description="Uncharacterized lipoprotein MPN_650">
    <location>
        <begin position="20"/>
        <end position="101"/>
    </location>
</feature>
<feature type="lipid moiety-binding region" description="N-palmitoyl cysteine" evidence="1">
    <location>
        <position position="20"/>
    </location>
</feature>
<feature type="lipid moiety-binding region" description="S-diacylglycerol cysteine" evidence="1">
    <location>
        <position position="20"/>
    </location>
</feature>
<gene>
    <name type="ordered locus">MPN_650</name>
    <name type="ORF">E09_orf101</name>
    <name type="ORF">MP192</name>
</gene>
<keyword id="KW-1003">Cell membrane</keyword>
<keyword id="KW-0449">Lipoprotein</keyword>
<keyword id="KW-0472">Membrane</keyword>
<keyword id="KW-0564">Palmitate</keyword>
<keyword id="KW-1185">Reference proteome</keyword>
<keyword id="KW-0732">Signal</keyword>
<protein>
    <recommendedName>
        <fullName>Uncharacterized lipoprotein MPN_650</fullName>
    </recommendedName>
</protein>
<sequence length="101" mass="11183">MKFKYLSTPLLFSALLFSACSSVNVGANLKSLIKETTDQDLDLSESVSTSEGKKNLISSLKKSYETNPSKTASVLLNAWKQSVENGQIESSETNWTNWKFP</sequence>